<gene>
    <name evidence="1" type="primary">aroA</name>
    <name type="ordered locus">str0645</name>
</gene>
<sequence length="427" mass="45937">MKLETKAQGLRGSLRIPGDKSISHRSIMFGSLAKGVTTVRDILRGEDVLSTMQVFRDLGVTIEDDGDVVRIHGVGFDGLKAPQNKLDMGNSGTSIRLISGVLAGQDFDVEMFGDDSLSKRPMDRVTIPLRQMGVEVSGQTDRDLPPLKMHGSKSLKPIYYELPVASAQVKSALIFAALQADGESVIIEKEKTRNHTEDMIQQFGGQLQVEGKEIRISGGQTFTAQEVVVPGDISSAAFWLVAGLVVPNSKIVLKNVGINETRTGIIDVIKDMGGKIKLSDIDQVAKSATITVETSELKGTEIGGDIIPRLIDELPIITLLATQAQGKTVIRDAEELKVKETDRIQVVADALNAMGADIVPTEDGMIITGKTPLHGAEVNTFGDHRIGMMTAIAALLVQDGEVDLQRAEAINTSYPSFFSDLEGLLHG</sequence>
<keyword id="KW-0028">Amino-acid biosynthesis</keyword>
<keyword id="KW-0057">Aromatic amino acid biosynthesis</keyword>
<keyword id="KW-0963">Cytoplasm</keyword>
<keyword id="KW-0808">Transferase</keyword>
<evidence type="ECO:0000255" key="1">
    <source>
        <dbReference type="HAMAP-Rule" id="MF_00210"/>
    </source>
</evidence>
<reference key="1">
    <citation type="journal article" date="2004" name="Nat. Biotechnol.">
        <title>Complete sequence and comparative genome analysis of the dairy bacterium Streptococcus thermophilus.</title>
        <authorList>
            <person name="Bolotin A."/>
            <person name="Quinquis B."/>
            <person name="Renault P."/>
            <person name="Sorokin A."/>
            <person name="Ehrlich S.D."/>
            <person name="Kulakauskas S."/>
            <person name="Lapidus A."/>
            <person name="Goltsman E."/>
            <person name="Mazur M."/>
            <person name="Pusch G.D."/>
            <person name="Fonstein M."/>
            <person name="Overbeek R."/>
            <person name="Kyprides N."/>
            <person name="Purnelle B."/>
            <person name="Prozzi D."/>
            <person name="Ngui K."/>
            <person name="Masuy D."/>
            <person name="Hancy F."/>
            <person name="Burteau S."/>
            <person name="Boutry M."/>
            <person name="Delcour J."/>
            <person name="Goffeau A."/>
            <person name="Hols P."/>
        </authorList>
    </citation>
    <scope>NUCLEOTIDE SEQUENCE [LARGE SCALE GENOMIC DNA]</scope>
    <source>
        <strain>CNRZ 1066</strain>
    </source>
</reference>
<proteinExistence type="inferred from homology"/>
<organism>
    <name type="scientific">Streptococcus thermophilus (strain CNRZ 1066)</name>
    <dbReference type="NCBI Taxonomy" id="299768"/>
    <lineage>
        <taxon>Bacteria</taxon>
        <taxon>Bacillati</taxon>
        <taxon>Bacillota</taxon>
        <taxon>Bacilli</taxon>
        <taxon>Lactobacillales</taxon>
        <taxon>Streptococcaceae</taxon>
        <taxon>Streptococcus</taxon>
    </lineage>
</organism>
<comment type="function">
    <text evidence="1">Catalyzes the transfer of the enolpyruvyl moiety of phosphoenolpyruvate (PEP) to the 5-hydroxyl of shikimate-3-phosphate (S3P) to produce enolpyruvyl shikimate-3-phosphate and inorganic phosphate.</text>
</comment>
<comment type="catalytic activity">
    <reaction evidence="1">
        <text>3-phosphoshikimate + phosphoenolpyruvate = 5-O-(1-carboxyvinyl)-3-phosphoshikimate + phosphate</text>
        <dbReference type="Rhea" id="RHEA:21256"/>
        <dbReference type="ChEBI" id="CHEBI:43474"/>
        <dbReference type="ChEBI" id="CHEBI:57701"/>
        <dbReference type="ChEBI" id="CHEBI:58702"/>
        <dbReference type="ChEBI" id="CHEBI:145989"/>
        <dbReference type="EC" id="2.5.1.19"/>
    </reaction>
    <physiologicalReaction direction="left-to-right" evidence="1">
        <dbReference type="Rhea" id="RHEA:21257"/>
    </physiologicalReaction>
</comment>
<comment type="pathway">
    <text evidence="1">Metabolic intermediate biosynthesis; chorismate biosynthesis; chorismate from D-erythrose 4-phosphate and phosphoenolpyruvate: step 6/7.</text>
</comment>
<comment type="subunit">
    <text evidence="1">Monomer.</text>
</comment>
<comment type="subcellular location">
    <subcellularLocation>
        <location evidence="1">Cytoplasm</location>
    </subcellularLocation>
</comment>
<comment type="similarity">
    <text evidence="1">Belongs to the EPSP synthase family.</text>
</comment>
<accession>Q5M0L5</accession>
<protein>
    <recommendedName>
        <fullName evidence="1">3-phosphoshikimate 1-carboxyvinyltransferase</fullName>
        <ecNumber evidence="1">2.5.1.19</ecNumber>
    </recommendedName>
    <alternativeName>
        <fullName evidence="1">5-enolpyruvylshikimate-3-phosphate synthase</fullName>
        <shortName evidence="1">EPSP synthase</shortName>
        <shortName evidence="1">EPSPS</shortName>
    </alternativeName>
</protein>
<feature type="chain" id="PRO_1000012499" description="3-phosphoshikimate 1-carboxyvinyltransferase">
    <location>
        <begin position="1"/>
        <end position="427"/>
    </location>
</feature>
<feature type="active site" description="Proton acceptor" evidence="1">
    <location>
        <position position="312"/>
    </location>
</feature>
<feature type="binding site" evidence="1">
    <location>
        <position position="20"/>
    </location>
    <ligand>
        <name>3-phosphoshikimate</name>
        <dbReference type="ChEBI" id="CHEBI:145989"/>
    </ligand>
</feature>
<feature type="binding site" evidence="1">
    <location>
        <position position="20"/>
    </location>
    <ligand>
        <name>phosphoenolpyruvate</name>
        <dbReference type="ChEBI" id="CHEBI:58702"/>
    </ligand>
</feature>
<feature type="binding site" evidence="1">
    <location>
        <position position="21"/>
    </location>
    <ligand>
        <name>3-phosphoshikimate</name>
        <dbReference type="ChEBI" id="CHEBI:145989"/>
    </ligand>
</feature>
<feature type="binding site" evidence="1">
    <location>
        <position position="25"/>
    </location>
    <ligand>
        <name>3-phosphoshikimate</name>
        <dbReference type="ChEBI" id="CHEBI:145989"/>
    </ligand>
</feature>
<feature type="binding site" evidence="1">
    <location>
        <position position="92"/>
    </location>
    <ligand>
        <name>phosphoenolpyruvate</name>
        <dbReference type="ChEBI" id="CHEBI:58702"/>
    </ligand>
</feature>
<feature type="binding site" evidence="1">
    <location>
        <position position="120"/>
    </location>
    <ligand>
        <name>phosphoenolpyruvate</name>
        <dbReference type="ChEBI" id="CHEBI:58702"/>
    </ligand>
</feature>
<feature type="binding site" evidence="1">
    <location>
        <position position="166"/>
    </location>
    <ligand>
        <name>3-phosphoshikimate</name>
        <dbReference type="ChEBI" id="CHEBI:145989"/>
    </ligand>
</feature>
<feature type="binding site" evidence="1">
    <location>
        <position position="168"/>
    </location>
    <ligand>
        <name>3-phosphoshikimate</name>
        <dbReference type="ChEBI" id="CHEBI:145989"/>
    </ligand>
</feature>
<feature type="binding site" evidence="1">
    <location>
        <position position="168"/>
    </location>
    <ligand>
        <name>phosphoenolpyruvate</name>
        <dbReference type="ChEBI" id="CHEBI:58702"/>
    </ligand>
</feature>
<feature type="binding site" evidence="1">
    <location>
        <position position="312"/>
    </location>
    <ligand>
        <name>3-phosphoshikimate</name>
        <dbReference type="ChEBI" id="CHEBI:145989"/>
    </ligand>
</feature>
<feature type="binding site" evidence="1">
    <location>
        <position position="339"/>
    </location>
    <ligand>
        <name>3-phosphoshikimate</name>
        <dbReference type="ChEBI" id="CHEBI:145989"/>
    </ligand>
</feature>
<feature type="binding site" evidence="1">
    <location>
        <position position="343"/>
    </location>
    <ligand>
        <name>phosphoenolpyruvate</name>
        <dbReference type="ChEBI" id="CHEBI:58702"/>
    </ligand>
</feature>
<feature type="binding site" evidence="1">
    <location>
        <position position="385"/>
    </location>
    <ligand>
        <name>phosphoenolpyruvate</name>
        <dbReference type="ChEBI" id="CHEBI:58702"/>
    </ligand>
</feature>
<name>AROA_STRT1</name>
<dbReference type="EC" id="2.5.1.19" evidence="1"/>
<dbReference type="EMBL" id="CP000024">
    <property type="protein sequence ID" value="AAV62241.1"/>
    <property type="molecule type" value="Genomic_DNA"/>
</dbReference>
<dbReference type="RefSeq" id="WP_011227019.1">
    <property type="nucleotide sequence ID" value="NC_006449.1"/>
</dbReference>
<dbReference type="SMR" id="Q5M0L5"/>
<dbReference type="GeneID" id="66898553"/>
<dbReference type="KEGG" id="stc:str0645"/>
<dbReference type="HOGENOM" id="CLU_024321_0_1_9"/>
<dbReference type="UniPathway" id="UPA00053">
    <property type="reaction ID" value="UER00089"/>
</dbReference>
<dbReference type="GO" id="GO:0005737">
    <property type="term" value="C:cytoplasm"/>
    <property type="evidence" value="ECO:0007669"/>
    <property type="project" value="UniProtKB-SubCell"/>
</dbReference>
<dbReference type="GO" id="GO:0003866">
    <property type="term" value="F:3-phosphoshikimate 1-carboxyvinyltransferase activity"/>
    <property type="evidence" value="ECO:0007669"/>
    <property type="project" value="UniProtKB-UniRule"/>
</dbReference>
<dbReference type="GO" id="GO:0008652">
    <property type="term" value="P:amino acid biosynthetic process"/>
    <property type="evidence" value="ECO:0007669"/>
    <property type="project" value="UniProtKB-KW"/>
</dbReference>
<dbReference type="GO" id="GO:0009073">
    <property type="term" value="P:aromatic amino acid family biosynthetic process"/>
    <property type="evidence" value="ECO:0007669"/>
    <property type="project" value="UniProtKB-KW"/>
</dbReference>
<dbReference type="GO" id="GO:0009423">
    <property type="term" value="P:chorismate biosynthetic process"/>
    <property type="evidence" value="ECO:0007669"/>
    <property type="project" value="UniProtKB-UniRule"/>
</dbReference>
<dbReference type="CDD" id="cd01556">
    <property type="entry name" value="EPSP_synthase"/>
    <property type="match status" value="1"/>
</dbReference>
<dbReference type="FunFam" id="3.65.10.10:FF:000005">
    <property type="entry name" value="3-phosphoshikimate 1-carboxyvinyltransferase"/>
    <property type="match status" value="1"/>
</dbReference>
<dbReference type="FunFam" id="3.65.10.10:FF:000006">
    <property type="entry name" value="3-phosphoshikimate 1-carboxyvinyltransferase"/>
    <property type="match status" value="1"/>
</dbReference>
<dbReference type="Gene3D" id="3.65.10.10">
    <property type="entry name" value="Enolpyruvate transferase domain"/>
    <property type="match status" value="2"/>
</dbReference>
<dbReference type="HAMAP" id="MF_00210">
    <property type="entry name" value="EPSP_synth"/>
    <property type="match status" value="1"/>
</dbReference>
<dbReference type="InterPro" id="IPR001986">
    <property type="entry name" value="Enolpyruvate_Tfrase_dom"/>
</dbReference>
<dbReference type="InterPro" id="IPR036968">
    <property type="entry name" value="Enolpyruvate_Tfrase_sf"/>
</dbReference>
<dbReference type="InterPro" id="IPR006264">
    <property type="entry name" value="EPSP_synthase"/>
</dbReference>
<dbReference type="InterPro" id="IPR023193">
    <property type="entry name" value="EPSP_synthase_CS"/>
</dbReference>
<dbReference type="InterPro" id="IPR013792">
    <property type="entry name" value="RNA3'P_cycl/enolpyr_Trfase_a/b"/>
</dbReference>
<dbReference type="NCBIfam" id="TIGR01356">
    <property type="entry name" value="aroA"/>
    <property type="match status" value="1"/>
</dbReference>
<dbReference type="PANTHER" id="PTHR21090">
    <property type="entry name" value="AROM/DEHYDROQUINATE SYNTHASE"/>
    <property type="match status" value="1"/>
</dbReference>
<dbReference type="PANTHER" id="PTHR21090:SF5">
    <property type="entry name" value="PENTAFUNCTIONAL AROM POLYPEPTIDE"/>
    <property type="match status" value="1"/>
</dbReference>
<dbReference type="Pfam" id="PF00275">
    <property type="entry name" value="EPSP_synthase"/>
    <property type="match status" value="1"/>
</dbReference>
<dbReference type="PIRSF" id="PIRSF000505">
    <property type="entry name" value="EPSPS"/>
    <property type="match status" value="1"/>
</dbReference>
<dbReference type="SUPFAM" id="SSF55205">
    <property type="entry name" value="EPT/RTPC-like"/>
    <property type="match status" value="1"/>
</dbReference>
<dbReference type="PROSITE" id="PS00104">
    <property type="entry name" value="EPSP_SYNTHASE_1"/>
    <property type="match status" value="1"/>
</dbReference>
<dbReference type="PROSITE" id="PS00885">
    <property type="entry name" value="EPSP_SYNTHASE_2"/>
    <property type="match status" value="1"/>
</dbReference>